<gene>
    <name type="ordered locus">HI_1328.1</name>
</gene>
<name>Y132A_HAEIN</name>
<comment type="similarity">
    <text evidence="1">To insertion element IS1016 transposase.</text>
</comment>
<evidence type="ECO:0000305" key="1"/>
<keyword id="KW-0233">DNA recombination</keyword>
<keyword id="KW-1185">Reference proteome</keyword>
<keyword id="KW-0814">Transposable element</keyword>
<keyword id="KW-0815">Transposition</keyword>
<organism>
    <name type="scientific">Haemophilus influenzae (strain ATCC 51907 / DSM 11121 / KW20 / Rd)</name>
    <dbReference type="NCBI Taxonomy" id="71421"/>
    <lineage>
        <taxon>Bacteria</taxon>
        <taxon>Pseudomonadati</taxon>
        <taxon>Pseudomonadota</taxon>
        <taxon>Gammaproteobacteria</taxon>
        <taxon>Pasteurellales</taxon>
        <taxon>Pasteurellaceae</taxon>
        <taxon>Haemophilus</taxon>
    </lineage>
</organism>
<sequence>MKCKVYTVVVPNVQSATLLPIIREKVKPDSIVYTDTFRSYDVLDVSEFSHFRINHSTHFAENHNYINGIGNFWNHAKRHLQKFNGIPKEHFELYLKECEWRFNNSEIKSQISILKQLVKGSLV</sequence>
<accession>O86236</accession>
<protein>
    <recommendedName>
        <fullName>Uncharacterized transposase-like protein HI_1328.1</fullName>
    </recommendedName>
</protein>
<dbReference type="EMBL" id="L42023">
    <property type="protein sequence ID" value="AAC22982.1"/>
    <property type="molecule type" value="Genomic_DNA"/>
</dbReference>
<dbReference type="STRING" id="71421.HI_1328.1"/>
<dbReference type="EnsemblBacteria" id="AAC22982">
    <property type="protein sequence ID" value="AAC22982"/>
    <property type="gene ID" value="HI_1328.1"/>
</dbReference>
<dbReference type="KEGG" id="hin:HI_1328.1"/>
<dbReference type="eggNOG" id="COG3676">
    <property type="taxonomic scope" value="Bacteria"/>
</dbReference>
<dbReference type="HOGENOM" id="CLU_044348_11_3_6"/>
<dbReference type="Proteomes" id="UP000000579">
    <property type="component" value="Chromosome"/>
</dbReference>
<dbReference type="GO" id="GO:0006310">
    <property type="term" value="P:DNA recombination"/>
    <property type="evidence" value="ECO:0007669"/>
    <property type="project" value="UniProtKB-KW"/>
</dbReference>
<dbReference type="GO" id="GO:0032196">
    <property type="term" value="P:transposition"/>
    <property type="evidence" value="ECO:0007669"/>
    <property type="project" value="UniProtKB-KW"/>
</dbReference>
<dbReference type="InterPro" id="IPR053164">
    <property type="entry name" value="IS1016-like_transposase"/>
</dbReference>
<dbReference type="InterPro" id="IPR024445">
    <property type="entry name" value="Tnp_ISXO2-like"/>
</dbReference>
<dbReference type="NCBIfam" id="NF033547">
    <property type="entry name" value="transpos_IS1595"/>
    <property type="match status" value="1"/>
</dbReference>
<dbReference type="PANTHER" id="PTHR47163">
    <property type="entry name" value="DDE_TNP_IS1595 DOMAIN-CONTAINING PROTEIN"/>
    <property type="match status" value="1"/>
</dbReference>
<dbReference type="PANTHER" id="PTHR47163:SF2">
    <property type="entry name" value="SI:DKEY-17M8.2"/>
    <property type="match status" value="1"/>
</dbReference>
<dbReference type="Pfam" id="PF12762">
    <property type="entry name" value="DDE_Tnp_IS1595"/>
    <property type="match status" value="1"/>
</dbReference>
<dbReference type="SMART" id="SM01126">
    <property type="entry name" value="DDE_Tnp_IS1595"/>
    <property type="match status" value="1"/>
</dbReference>
<proteinExistence type="predicted"/>
<reference key="1">
    <citation type="journal article" date="1995" name="Science">
        <title>Whole-genome random sequencing and assembly of Haemophilus influenzae Rd.</title>
        <authorList>
            <person name="Fleischmann R.D."/>
            <person name="Adams M.D."/>
            <person name="White O."/>
            <person name="Clayton R.A."/>
            <person name="Kirkness E.F."/>
            <person name="Kerlavage A.R."/>
            <person name="Bult C.J."/>
            <person name="Tomb J.-F."/>
            <person name="Dougherty B.A."/>
            <person name="Merrick J.M."/>
            <person name="McKenney K."/>
            <person name="Sutton G.G."/>
            <person name="FitzHugh W."/>
            <person name="Fields C.A."/>
            <person name="Gocayne J.D."/>
            <person name="Scott J.D."/>
            <person name="Shirley R."/>
            <person name="Liu L.-I."/>
            <person name="Glodek A."/>
            <person name="Kelley J.M."/>
            <person name="Weidman J.F."/>
            <person name="Phillips C.A."/>
            <person name="Spriggs T."/>
            <person name="Hedblom E."/>
            <person name="Cotton M.D."/>
            <person name="Utterback T.R."/>
            <person name="Hanna M.C."/>
            <person name="Nguyen D.T."/>
            <person name="Saudek D.M."/>
            <person name="Brandon R.C."/>
            <person name="Fine L.D."/>
            <person name="Fritchman J.L."/>
            <person name="Fuhrmann J.L."/>
            <person name="Geoghagen N.S.M."/>
            <person name="Gnehm C.L."/>
            <person name="McDonald L.A."/>
            <person name="Small K.V."/>
            <person name="Fraser C.M."/>
            <person name="Smith H.O."/>
            <person name="Venter J.C."/>
        </authorList>
    </citation>
    <scope>NUCLEOTIDE SEQUENCE [LARGE SCALE GENOMIC DNA]</scope>
    <source>
        <strain>ATCC 51907 / DSM 11121 / KW20 / Rd</strain>
    </source>
</reference>
<reference key="2">
    <citation type="submission" date="1998-05" db="EMBL/GenBank/DDBJ databases">
        <authorList>
            <person name="White O."/>
            <person name="Clayton R.A."/>
            <person name="Kerlavage A.R."/>
            <person name="Fleischmann R.D."/>
            <person name="Peterson J."/>
            <person name="Hickey E."/>
            <person name="Dodson R."/>
            <person name="Gwinn M."/>
        </authorList>
    </citation>
    <scope>IDENTIFICATION</scope>
</reference>
<feature type="chain" id="PRO_0000078027" description="Uncharacterized transposase-like protein HI_1328.1">
    <location>
        <begin position="1"/>
        <end position="123"/>
    </location>
</feature>